<proteinExistence type="inferred from homology"/>
<accession>B7LN86</accession>
<comment type="function">
    <text evidence="1">Plays a central role in chromosome condensation, segregation and cell cycle progression. Functions as a homodimer, which is essential for chromosome partition. Involved in negative DNA supercoiling in vivo, and by this means organize and compact chromosomes. May achieve or facilitate chromosome segregation by condensation DNA from both sides of a centrally located replisome during cell division.</text>
</comment>
<comment type="subunit">
    <text evidence="1">Homodimerization via its hinge domain. Binds to DNA via its C-terminal region. Interacts, and probably forms a ternary complex, with MukE and MukF via its C-terminal region. The complex formation is stimulated by calcium or magnesium. Interacts with tubulin-related protein FtsZ.</text>
</comment>
<comment type="subcellular location">
    <subcellularLocation>
        <location evidence="1">Cytoplasm</location>
        <location evidence="1">Nucleoid</location>
    </subcellularLocation>
    <text evidence="1">Restricted to the nucleoid region.</text>
</comment>
<comment type="domain">
    <text evidence="1">The hinge domain, which separates the large intramolecular coiled coil regions, allows the homodimerization, forming a V-shaped homodimer.</text>
</comment>
<comment type="similarity">
    <text evidence="1">Belongs to the SMC family. MukB subfamily.</text>
</comment>
<protein>
    <recommendedName>
        <fullName evidence="1">Chromosome partition protein MukB</fullName>
    </recommendedName>
    <alternativeName>
        <fullName evidence="1">Structural maintenance of chromosome-related protein</fullName>
    </alternativeName>
</protein>
<name>MUKB_ESCF3</name>
<sequence>MIERGKFRSLTLINWNGFFARTFDLDELVTTLSGGNGAGKSTTMAAFVTALIPDLTLLHFRNTTEAGATSGSRDKGLHGKLKAGVCYSMLDTINSRHQRVVVGVRLQQVAGRDRKVDIKPFAIQGLPMSVQPTQLVTETLNERQARVLPLNELKDKLEAMEGVQFKQFNSITDYHSLMFDLGIIARRLRSASDRSKFYRLIEASLYGGISSAITRSLRDYLLPENSGVRKAFQDMEAALRENRMTLEAIRVTQSDRDLFKHLISEATNYVAADYMRHANERRVHLDKALEFRRELHTSRQQLAAEQYKHVDMARELAEHNGAEGDLEADYQAASDHLNLVQTALRQQEKIERYEADLDELQVRLEEQNEVVAEAIERQEENEARAEAAELEVDELKSQLADYQQALDVQQTRAIQYNQAIAALNRAKELCHLPDLTADSAAEWLETFQAKELEATEKMLSLEQKMSMAQTAHSQFEQAYQLVVAINGPLARNEAWDVARELLREGVDQRHLAEQVQPLRMRLSELEQRLREQQEAERLLADFCKRQGKNFDIDELEALHQELEARIASLSDSVSNAREERMALRQEQEQLQSRIQSLMQRAPVWLAAQNSLNQLSEQCGEAFSSSQDVTEYLQQLLEREREAIVERDEVGARKNAVDEEIERLSQPGGSEDQRLNALAERFGGVLLSEIYDDVSLEDAPYFSALYGPSRHAIVVPDLSQVTEHLEGLTDCPEDLYLIEGDPQSFDDSVFSVDELEKAVVVKIADRQWRYSRFPEVPLFGRAARESRIESLHAEREVLSERFATLSFDVQKTQRLHQAFSRFIGSHLAVAFESDPEAEIRQLNSRRVELERALSNHENDNQQQRIQFEQAKEGVTALNRILPRLNLLADDSLADRVDEIRERLDEAQEAARFVQQFGNQLAKLEPIVSVLQSDPEQFEQLKEDYAYSQQMQRDARQQAFALTEVVQRRAHFSYSDSAEMLSGNSDLNEKLRERLEQAEAERTRAREALRGHAAQLSQYNQVLASLKSSYDTKKELLNDLQRELQDIGVRADSGAEERARIRRDELHAQLSNNRSRRNQLEKALTFCEAEMDNLTRKLRKLERDYFEMREQVVTAKAGWCAVMRMVKDNGVERRLHRRELAYLSADDLRSMSDKALGALRLAVADNEHLRDVLRLSEDPKRPERKIQFFVAVYQHLRERIRQDIIRTDDPVEAIEQMEIELSRLTEELTSREQKLAISSRSVANIIRKTIQREQNRIRMLNQGLQNVSFGQVNSVRLNVNVRETHAMLLDVLSEQHEQHQDLFNSNRLTFSEALAKLYQRLNPQIDMGQRTPQTIGEELLDYRNYLEMEVEVNRGSDGWLRAESGALSTGEAIGTGMSILVMVVQSWEDESRRLRGKDISPCRLLFLDEAARLDARSIATLFELCERLQMQLIIAAPENISPEKGTTYKLVRKVFQNTEHVHVVGLRGFTPQLPETLPGTVDAPSEAS</sequence>
<evidence type="ECO:0000255" key="1">
    <source>
        <dbReference type="HAMAP-Rule" id="MF_01800"/>
    </source>
</evidence>
<organism>
    <name type="scientific">Escherichia fergusonii (strain ATCC 35469 / DSM 13698 / CCUG 18766 / IAM 14443 / JCM 21226 / LMG 7866 / NBRC 102419 / NCTC 12128 / CDC 0568-73)</name>
    <dbReference type="NCBI Taxonomy" id="585054"/>
    <lineage>
        <taxon>Bacteria</taxon>
        <taxon>Pseudomonadati</taxon>
        <taxon>Pseudomonadota</taxon>
        <taxon>Gammaproteobacteria</taxon>
        <taxon>Enterobacterales</taxon>
        <taxon>Enterobacteriaceae</taxon>
        <taxon>Escherichia</taxon>
    </lineage>
</organism>
<keyword id="KW-0067">ATP-binding</keyword>
<keyword id="KW-0131">Cell cycle</keyword>
<keyword id="KW-0132">Cell division</keyword>
<keyword id="KW-0159">Chromosome partition</keyword>
<keyword id="KW-0175">Coiled coil</keyword>
<keyword id="KW-0963">Cytoplasm</keyword>
<keyword id="KW-0226">DNA condensation</keyword>
<keyword id="KW-0238">DNA-binding</keyword>
<keyword id="KW-0547">Nucleotide-binding</keyword>
<reference key="1">
    <citation type="journal article" date="2009" name="PLoS Genet.">
        <title>Organised genome dynamics in the Escherichia coli species results in highly diverse adaptive paths.</title>
        <authorList>
            <person name="Touchon M."/>
            <person name="Hoede C."/>
            <person name="Tenaillon O."/>
            <person name="Barbe V."/>
            <person name="Baeriswyl S."/>
            <person name="Bidet P."/>
            <person name="Bingen E."/>
            <person name="Bonacorsi S."/>
            <person name="Bouchier C."/>
            <person name="Bouvet O."/>
            <person name="Calteau A."/>
            <person name="Chiapello H."/>
            <person name="Clermont O."/>
            <person name="Cruveiller S."/>
            <person name="Danchin A."/>
            <person name="Diard M."/>
            <person name="Dossat C."/>
            <person name="Karoui M.E."/>
            <person name="Frapy E."/>
            <person name="Garry L."/>
            <person name="Ghigo J.M."/>
            <person name="Gilles A.M."/>
            <person name="Johnson J."/>
            <person name="Le Bouguenec C."/>
            <person name="Lescat M."/>
            <person name="Mangenot S."/>
            <person name="Martinez-Jehanne V."/>
            <person name="Matic I."/>
            <person name="Nassif X."/>
            <person name="Oztas S."/>
            <person name="Petit M.A."/>
            <person name="Pichon C."/>
            <person name="Rouy Z."/>
            <person name="Ruf C.S."/>
            <person name="Schneider D."/>
            <person name="Tourret J."/>
            <person name="Vacherie B."/>
            <person name="Vallenet D."/>
            <person name="Medigue C."/>
            <person name="Rocha E.P.C."/>
            <person name="Denamur E."/>
        </authorList>
    </citation>
    <scope>NUCLEOTIDE SEQUENCE [LARGE SCALE GENOMIC DNA]</scope>
    <source>
        <strain>ATCC 35469 / DSM 13698 / BCRC 15582 / CCUG 18766 / IAM 14443 / JCM 21226 / LMG 7866 / NBRC 102419 / NCTC 12128 / CDC 0568-73</strain>
    </source>
</reference>
<gene>
    <name evidence="1" type="primary">mukB</name>
    <name type="ordered locus">EFER_1068</name>
</gene>
<feature type="chain" id="PRO_1000187478" description="Chromosome partition protein MukB">
    <location>
        <begin position="1"/>
        <end position="1486"/>
    </location>
</feature>
<feature type="region of interest" description="Flexible hinge" evidence="1">
    <location>
        <begin position="666"/>
        <end position="783"/>
    </location>
</feature>
<feature type="coiled-coil region" evidence="1">
    <location>
        <begin position="326"/>
        <end position="418"/>
    </location>
</feature>
<feature type="coiled-coil region" evidence="1">
    <location>
        <begin position="444"/>
        <end position="480"/>
    </location>
</feature>
<feature type="coiled-coil region" evidence="1">
    <location>
        <begin position="509"/>
        <end position="603"/>
    </location>
</feature>
<feature type="coiled-coil region" evidence="1">
    <location>
        <begin position="835"/>
        <end position="923"/>
    </location>
</feature>
<feature type="coiled-coil region" evidence="1">
    <location>
        <begin position="977"/>
        <end position="1115"/>
    </location>
</feature>
<feature type="coiled-coil region" evidence="1">
    <location>
        <begin position="1209"/>
        <end position="1266"/>
    </location>
</feature>
<feature type="binding site" evidence="1">
    <location>
        <begin position="34"/>
        <end position="41"/>
    </location>
    <ligand>
        <name>ATP</name>
        <dbReference type="ChEBI" id="CHEBI:30616"/>
    </ligand>
</feature>
<dbReference type="EMBL" id="CU928158">
    <property type="protein sequence ID" value="CAQ88597.1"/>
    <property type="molecule type" value="Genomic_DNA"/>
</dbReference>
<dbReference type="RefSeq" id="WP_000572699.1">
    <property type="nucleotide sequence ID" value="NC_011740.1"/>
</dbReference>
<dbReference type="SMR" id="B7LN86"/>
<dbReference type="GeneID" id="75057881"/>
<dbReference type="KEGG" id="efe:EFER_1068"/>
<dbReference type="HOGENOM" id="CLU_004430_0_0_6"/>
<dbReference type="OrthoDB" id="6722439at2"/>
<dbReference type="Proteomes" id="UP000000745">
    <property type="component" value="Chromosome"/>
</dbReference>
<dbReference type="GO" id="GO:0005737">
    <property type="term" value="C:cytoplasm"/>
    <property type="evidence" value="ECO:0007669"/>
    <property type="project" value="UniProtKB-UniRule"/>
</dbReference>
<dbReference type="GO" id="GO:0009295">
    <property type="term" value="C:nucleoid"/>
    <property type="evidence" value="ECO:0007669"/>
    <property type="project" value="UniProtKB-SubCell"/>
</dbReference>
<dbReference type="GO" id="GO:0005524">
    <property type="term" value="F:ATP binding"/>
    <property type="evidence" value="ECO:0007669"/>
    <property type="project" value="UniProtKB-UniRule"/>
</dbReference>
<dbReference type="GO" id="GO:0003677">
    <property type="term" value="F:DNA binding"/>
    <property type="evidence" value="ECO:0007669"/>
    <property type="project" value="UniProtKB-UniRule"/>
</dbReference>
<dbReference type="GO" id="GO:0051301">
    <property type="term" value="P:cell division"/>
    <property type="evidence" value="ECO:0007669"/>
    <property type="project" value="UniProtKB-KW"/>
</dbReference>
<dbReference type="GO" id="GO:0030261">
    <property type="term" value="P:chromosome condensation"/>
    <property type="evidence" value="ECO:0007669"/>
    <property type="project" value="UniProtKB-KW"/>
</dbReference>
<dbReference type="GO" id="GO:0007059">
    <property type="term" value="P:chromosome segregation"/>
    <property type="evidence" value="ECO:0007669"/>
    <property type="project" value="UniProtKB-UniRule"/>
</dbReference>
<dbReference type="GO" id="GO:0006260">
    <property type="term" value="P:DNA replication"/>
    <property type="evidence" value="ECO:0007669"/>
    <property type="project" value="UniProtKB-UniRule"/>
</dbReference>
<dbReference type="FunFam" id="3.30.70.3500:FF:000001">
    <property type="entry name" value="Chromosome partition protein MukB"/>
    <property type="match status" value="1"/>
</dbReference>
<dbReference type="FunFam" id="3.40.1140.10:FF:000001">
    <property type="entry name" value="Chromosome partition protein MukB"/>
    <property type="match status" value="1"/>
</dbReference>
<dbReference type="FunFam" id="3.40.1140.10:FF:000002">
    <property type="entry name" value="Chromosome partition protein MukB"/>
    <property type="match status" value="1"/>
</dbReference>
<dbReference type="Gene3D" id="1.20.58.850">
    <property type="match status" value="1"/>
</dbReference>
<dbReference type="Gene3D" id="3.40.1140.10">
    <property type="match status" value="2"/>
</dbReference>
<dbReference type="Gene3D" id="1.20.5.420">
    <property type="entry name" value="Immunoglobulin FC, subunit C"/>
    <property type="match status" value="1"/>
</dbReference>
<dbReference type="Gene3D" id="3.30.70.3500">
    <property type="entry name" value="MukB, hinge domain"/>
    <property type="match status" value="1"/>
</dbReference>
<dbReference type="HAMAP" id="MF_01800">
    <property type="entry name" value="MukB"/>
    <property type="match status" value="1"/>
</dbReference>
<dbReference type="InterPro" id="IPR012090">
    <property type="entry name" value="MukB"/>
</dbReference>
<dbReference type="InterPro" id="IPR050308">
    <property type="entry name" value="MukB/SMC"/>
</dbReference>
<dbReference type="InterPro" id="IPR032520">
    <property type="entry name" value="MukB_hinge"/>
</dbReference>
<dbReference type="InterPro" id="IPR042501">
    <property type="entry name" value="MukB_hinge_sf"/>
</dbReference>
<dbReference type="InterPro" id="IPR007406">
    <property type="entry name" value="MukB_N_dom"/>
</dbReference>
<dbReference type="InterPro" id="IPR027417">
    <property type="entry name" value="P-loop_NTPase"/>
</dbReference>
<dbReference type="NCBIfam" id="NF003422">
    <property type="entry name" value="PRK04863.1"/>
    <property type="match status" value="1"/>
</dbReference>
<dbReference type="PANTHER" id="PTHR42963">
    <property type="entry name" value="CHROMOSOME PARTITION PROTEIN MUKB"/>
    <property type="match status" value="1"/>
</dbReference>
<dbReference type="PANTHER" id="PTHR42963:SF1">
    <property type="entry name" value="DUF4476 DOMAIN-CONTAINING PROTEIN"/>
    <property type="match status" value="1"/>
</dbReference>
<dbReference type="Pfam" id="PF04310">
    <property type="entry name" value="MukB"/>
    <property type="match status" value="1"/>
</dbReference>
<dbReference type="Pfam" id="PF16330">
    <property type="entry name" value="MukB_hinge"/>
    <property type="match status" value="1"/>
</dbReference>
<dbReference type="Pfam" id="PF13558">
    <property type="entry name" value="SbcC_Walker_B"/>
    <property type="match status" value="1"/>
</dbReference>
<dbReference type="PIRSF" id="PIRSF005246">
    <property type="entry name" value="MukB"/>
    <property type="match status" value="1"/>
</dbReference>
<dbReference type="SUPFAM" id="SSF52540">
    <property type="entry name" value="P-loop containing nucleoside triphosphate hydrolases"/>
    <property type="match status" value="2"/>
</dbReference>